<keyword id="KW-0067">ATP-binding</keyword>
<keyword id="KW-0131">Cell cycle</keyword>
<keyword id="KW-0132">Cell division</keyword>
<keyword id="KW-0133">Cell shape</keyword>
<keyword id="KW-0961">Cell wall biogenesis/degradation</keyword>
<keyword id="KW-0963">Cytoplasm</keyword>
<keyword id="KW-0436">Ligase</keyword>
<keyword id="KW-0547">Nucleotide-binding</keyword>
<keyword id="KW-0573">Peptidoglycan synthesis</keyword>
<gene>
    <name evidence="1" type="primary">murD</name>
    <name type="ordered locus">BCAH820_3927</name>
</gene>
<proteinExistence type="inferred from homology"/>
<organism>
    <name type="scientific">Bacillus cereus (strain AH820)</name>
    <dbReference type="NCBI Taxonomy" id="405535"/>
    <lineage>
        <taxon>Bacteria</taxon>
        <taxon>Bacillati</taxon>
        <taxon>Bacillota</taxon>
        <taxon>Bacilli</taxon>
        <taxon>Bacillales</taxon>
        <taxon>Bacillaceae</taxon>
        <taxon>Bacillus</taxon>
        <taxon>Bacillus cereus group</taxon>
    </lineage>
</organism>
<accession>B7JK00</accession>
<dbReference type="EC" id="6.3.2.9" evidence="1"/>
<dbReference type="EMBL" id="CP001283">
    <property type="protein sequence ID" value="ACK89886.1"/>
    <property type="molecule type" value="Genomic_DNA"/>
</dbReference>
<dbReference type="RefSeq" id="WP_000860119.1">
    <property type="nucleotide sequence ID" value="NC_011773.1"/>
</dbReference>
<dbReference type="SMR" id="B7JK00"/>
<dbReference type="GeneID" id="45023741"/>
<dbReference type="KEGG" id="bcu:BCAH820_3927"/>
<dbReference type="HOGENOM" id="CLU_032540_0_1_9"/>
<dbReference type="UniPathway" id="UPA00219"/>
<dbReference type="Proteomes" id="UP000001363">
    <property type="component" value="Chromosome"/>
</dbReference>
<dbReference type="GO" id="GO:0005737">
    <property type="term" value="C:cytoplasm"/>
    <property type="evidence" value="ECO:0007669"/>
    <property type="project" value="UniProtKB-SubCell"/>
</dbReference>
<dbReference type="GO" id="GO:0005524">
    <property type="term" value="F:ATP binding"/>
    <property type="evidence" value="ECO:0007669"/>
    <property type="project" value="UniProtKB-UniRule"/>
</dbReference>
<dbReference type="GO" id="GO:0008764">
    <property type="term" value="F:UDP-N-acetylmuramoylalanine-D-glutamate ligase activity"/>
    <property type="evidence" value="ECO:0007669"/>
    <property type="project" value="UniProtKB-UniRule"/>
</dbReference>
<dbReference type="GO" id="GO:0051301">
    <property type="term" value="P:cell division"/>
    <property type="evidence" value="ECO:0007669"/>
    <property type="project" value="UniProtKB-KW"/>
</dbReference>
<dbReference type="GO" id="GO:0071555">
    <property type="term" value="P:cell wall organization"/>
    <property type="evidence" value="ECO:0007669"/>
    <property type="project" value="UniProtKB-KW"/>
</dbReference>
<dbReference type="GO" id="GO:0009252">
    <property type="term" value="P:peptidoglycan biosynthetic process"/>
    <property type="evidence" value="ECO:0007669"/>
    <property type="project" value="UniProtKB-UniRule"/>
</dbReference>
<dbReference type="GO" id="GO:0008360">
    <property type="term" value="P:regulation of cell shape"/>
    <property type="evidence" value="ECO:0007669"/>
    <property type="project" value="UniProtKB-KW"/>
</dbReference>
<dbReference type="Gene3D" id="3.90.190.20">
    <property type="entry name" value="Mur ligase, C-terminal domain"/>
    <property type="match status" value="1"/>
</dbReference>
<dbReference type="Gene3D" id="3.40.1190.10">
    <property type="entry name" value="Mur-like, catalytic domain"/>
    <property type="match status" value="1"/>
</dbReference>
<dbReference type="Gene3D" id="3.40.50.720">
    <property type="entry name" value="NAD(P)-binding Rossmann-like Domain"/>
    <property type="match status" value="1"/>
</dbReference>
<dbReference type="HAMAP" id="MF_00639">
    <property type="entry name" value="MurD"/>
    <property type="match status" value="1"/>
</dbReference>
<dbReference type="InterPro" id="IPR036565">
    <property type="entry name" value="Mur-like_cat_sf"/>
</dbReference>
<dbReference type="InterPro" id="IPR004101">
    <property type="entry name" value="Mur_ligase_C"/>
</dbReference>
<dbReference type="InterPro" id="IPR036615">
    <property type="entry name" value="Mur_ligase_C_dom_sf"/>
</dbReference>
<dbReference type="InterPro" id="IPR013221">
    <property type="entry name" value="Mur_ligase_cen"/>
</dbReference>
<dbReference type="InterPro" id="IPR005762">
    <property type="entry name" value="MurD"/>
</dbReference>
<dbReference type="NCBIfam" id="TIGR01087">
    <property type="entry name" value="murD"/>
    <property type="match status" value="1"/>
</dbReference>
<dbReference type="PANTHER" id="PTHR43692">
    <property type="entry name" value="UDP-N-ACETYLMURAMOYLALANINE--D-GLUTAMATE LIGASE"/>
    <property type="match status" value="1"/>
</dbReference>
<dbReference type="PANTHER" id="PTHR43692:SF1">
    <property type="entry name" value="UDP-N-ACETYLMURAMOYLALANINE--D-GLUTAMATE LIGASE"/>
    <property type="match status" value="1"/>
</dbReference>
<dbReference type="Pfam" id="PF02875">
    <property type="entry name" value="Mur_ligase_C"/>
    <property type="match status" value="1"/>
</dbReference>
<dbReference type="Pfam" id="PF08245">
    <property type="entry name" value="Mur_ligase_M"/>
    <property type="match status" value="1"/>
</dbReference>
<dbReference type="Pfam" id="PF21799">
    <property type="entry name" value="MurD-like_N"/>
    <property type="match status" value="1"/>
</dbReference>
<dbReference type="SUPFAM" id="SSF51984">
    <property type="entry name" value="MurCD N-terminal domain"/>
    <property type="match status" value="1"/>
</dbReference>
<dbReference type="SUPFAM" id="SSF53623">
    <property type="entry name" value="MurD-like peptide ligases, catalytic domain"/>
    <property type="match status" value="1"/>
</dbReference>
<dbReference type="SUPFAM" id="SSF53244">
    <property type="entry name" value="MurD-like peptide ligases, peptide-binding domain"/>
    <property type="match status" value="1"/>
</dbReference>
<evidence type="ECO:0000255" key="1">
    <source>
        <dbReference type="HAMAP-Rule" id="MF_00639"/>
    </source>
</evidence>
<protein>
    <recommendedName>
        <fullName evidence="1">UDP-N-acetylmuramoylalanine--D-glutamate ligase</fullName>
        <ecNumber evidence="1">6.3.2.9</ecNumber>
    </recommendedName>
    <alternativeName>
        <fullName evidence="1">D-glutamic acid-adding enzyme</fullName>
    </alternativeName>
    <alternativeName>
        <fullName evidence="1">UDP-N-acetylmuramoyl-L-alanyl-D-glutamate synthetase</fullName>
    </alternativeName>
</protein>
<name>MURD_BACC0</name>
<sequence length="450" mass="48901">MKTVTEFQNKNILVLGIAKSGYAAATLLQKLGANVIVNDGKPLAENVLAAELQAKGMDVVCGGHPLELLERNISLVVKNPGIPYSNPILVAAKEKQIPIVTEVELAYRISEAPFVGITGSNGKTTTTMLTFEMLKEGQKHPVIAGNIGTVACEVAQDAKENEVVVTELSSFQLMGVELFQPKIAAFLNLFEAHLDYHGTKKEYGLAKANIFKNQTENDYSVINADDADVMALSAYSKGQKVLFSTTKEIEDGACIKDNALYFKAEKVVEVDDIVLPGQHNLENILAAMSIAKLLGVSNEAITAVLKRFTGVKHRLEYVTTINNRKFYNDSKATNMLATEKALSAFTQPTVLLAGGLDRGNEFDDLIPYFKNVKAIVTFGQTAPKLVRAAEKAGLDTIESVDTLDEAVVKAYAHSTDGDVILLSPACASWDQFKTFEERGDIFIQAVHKLI</sequence>
<comment type="function">
    <text evidence="1">Cell wall formation. Catalyzes the addition of glutamate to the nucleotide precursor UDP-N-acetylmuramoyl-L-alanine (UMA).</text>
</comment>
<comment type="catalytic activity">
    <reaction evidence="1">
        <text>UDP-N-acetyl-alpha-D-muramoyl-L-alanine + D-glutamate + ATP = UDP-N-acetyl-alpha-D-muramoyl-L-alanyl-D-glutamate + ADP + phosphate + H(+)</text>
        <dbReference type="Rhea" id="RHEA:16429"/>
        <dbReference type="ChEBI" id="CHEBI:15378"/>
        <dbReference type="ChEBI" id="CHEBI:29986"/>
        <dbReference type="ChEBI" id="CHEBI:30616"/>
        <dbReference type="ChEBI" id="CHEBI:43474"/>
        <dbReference type="ChEBI" id="CHEBI:83898"/>
        <dbReference type="ChEBI" id="CHEBI:83900"/>
        <dbReference type="ChEBI" id="CHEBI:456216"/>
        <dbReference type="EC" id="6.3.2.9"/>
    </reaction>
</comment>
<comment type="pathway">
    <text evidence="1">Cell wall biogenesis; peptidoglycan biosynthesis.</text>
</comment>
<comment type="subcellular location">
    <subcellularLocation>
        <location evidence="1">Cytoplasm</location>
    </subcellularLocation>
</comment>
<comment type="similarity">
    <text evidence="1">Belongs to the MurCDEF family.</text>
</comment>
<reference key="1">
    <citation type="submission" date="2008-10" db="EMBL/GenBank/DDBJ databases">
        <title>Genome sequence of Bacillus cereus AH820.</title>
        <authorList>
            <person name="Dodson R.J."/>
            <person name="Durkin A.S."/>
            <person name="Rosovitz M.J."/>
            <person name="Rasko D.A."/>
            <person name="Hoffmaster A."/>
            <person name="Ravel J."/>
            <person name="Sutton G."/>
        </authorList>
    </citation>
    <scope>NUCLEOTIDE SEQUENCE [LARGE SCALE GENOMIC DNA]</scope>
    <source>
        <strain>AH820</strain>
    </source>
</reference>
<feature type="chain" id="PRO_1000130824" description="UDP-N-acetylmuramoylalanine--D-glutamate ligase">
    <location>
        <begin position="1"/>
        <end position="450"/>
    </location>
</feature>
<feature type="binding site" evidence="1">
    <location>
        <begin position="119"/>
        <end position="125"/>
    </location>
    <ligand>
        <name>ATP</name>
        <dbReference type="ChEBI" id="CHEBI:30616"/>
    </ligand>
</feature>